<gene>
    <name type="primary">SEC31</name>
    <name type="ORF">UMAG_05747</name>
</gene>
<feature type="chain" id="PRO_0000295447" description="Protein transport protein SEC31">
    <location>
        <begin position="1"/>
        <end position="1416"/>
    </location>
</feature>
<feature type="repeat" description="WD 1">
    <location>
        <begin position="8"/>
        <end position="48"/>
    </location>
</feature>
<feature type="repeat" description="WD 2">
    <location>
        <begin position="70"/>
        <end position="114"/>
    </location>
</feature>
<feature type="repeat" description="WD 3">
    <location>
        <begin position="125"/>
        <end position="165"/>
    </location>
</feature>
<feature type="repeat" description="WD 4">
    <location>
        <begin position="171"/>
        <end position="211"/>
    </location>
</feature>
<feature type="repeat" description="WD 5">
    <location>
        <begin position="236"/>
        <end position="279"/>
    </location>
</feature>
<feature type="repeat" description="WD 6">
    <location>
        <begin position="283"/>
        <end position="323"/>
    </location>
</feature>
<feature type="repeat" description="WD 7">
    <location>
        <begin position="326"/>
        <end position="366"/>
    </location>
</feature>
<feature type="repeat" description="WD 8; interaction with SEC13" evidence="2">
    <location>
        <begin position="410"/>
        <end position="435"/>
    </location>
</feature>
<feature type="region of interest" description="Disordered" evidence="3">
    <location>
        <begin position="1015"/>
        <end position="1040"/>
    </location>
</feature>
<feature type="region of interest" description="Disordered" evidence="3">
    <location>
        <begin position="1078"/>
        <end position="1317"/>
    </location>
</feature>
<feature type="compositionally biased region" description="Low complexity" evidence="3">
    <location>
        <begin position="1015"/>
        <end position="1024"/>
    </location>
</feature>
<feature type="compositionally biased region" description="Polar residues" evidence="3">
    <location>
        <begin position="1122"/>
        <end position="1137"/>
    </location>
</feature>
<feature type="compositionally biased region" description="Low complexity" evidence="3">
    <location>
        <begin position="1140"/>
        <end position="1149"/>
    </location>
</feature>
<feature type="compositionally biased region" description="Low complexity" evidence="3">
    <location>
        <begin position="1160"/>
        <end position="1170"/>
    </location>
</feature>
<feature type="compositionally biased region" description="Pro residues" evidence="3">
    <location>
        <begin position="1171"/>
        <end position="1180"/>
    </location>
</feature>
<feature type="compositionally biased region" description="Low complexity" evidence="3">
    <location>
        <begin position="1200"/>
        <end position="1211"/>
    </location>
</feature>
<feature type="compositionally biased region" description="Low complexity" evidence="3">
    <location>
        <begin position="1233"/>
        <end position="1246"/>
    </location>
</feature>
<feature type="compositionally biased region" description="Low complexity" evidence="3">
    <location>
        <begin position="1256"/>
        <end position="1271"/>
    </location>
</feature>
<feature type="compositionally biased region" description="Low complexity" evidence="3">
    <location>
        <begin position="1290"/>
        <end position="1299"/>
    </location>
</feature>
<name>SEC31_MYCMD</name>
<evidence type="ECO:0000250" key="1"/>
<evidence type="ECO:0000255" key="2">
    <source>
        <dbReference type="PROSITE-ProRule" id="PRU00221"/>
    </source>
</evidence>
<evidence type="ECO:0000256" key="3">
    <source>
        <dbReference type="SAM" id="MobiDB-lite"/>
    </source>
</evidence>
<evidence type="ECO:0000305" key="4"/>
<reference key="1">
    <citation type="journal article" date="2006" name="Nature">
        <title>Insights from the genome of the biotrophic fungal plant pathogen Ustilago maydis.</title>
        <authorList>
            <person name="Kaemper J."/>
            <person name="Kahmann R."/>
            <person name="Boelker M."/>
            <person name="Ma L.-J."/>
            <person name="Brefort T."/>
            <person name="Saville B.J."/>
            <person name="Banuett F."/>
            <person name="Kronstad J.W."/>
            <person name="Gold S.E."/>
            <person name="Mueller O."/>
            <person name="Perlin M.H."/>
            <person name="Woesten H.A.B."/>
            <person name="de Vries R."/>
            <person name="Ruiz-Herrera J."/>
            <person name="Reynaga-Pena C.G."/>
            <person name="Snetselaar K."/>
            <person name="McCann M."/>
            <person name="Perez-Martin J."/>
            <person name="Feldbruegge M."/>
            <person name="Basse C.W."/>
            <person name="Steinberg G."/>
            <person name="Ibeas J.I."/>
            <person name="Holloman W."/>
            <person name="Guzman P."/>
            <person name="Farman M.L."/>
            <person name="Stajich J.E."/>
            <person name="Sentandreu R."/>
            <person name="Gonzalez-Prieto J.M."/>
            <person name="Kennell J.C."/>
            <person name="Molina L."/>
            <person name="Schirawski J."/>
            <person name="Mendoza-Mendoza A."/>
            <person name="Greilinger D."/>
            <person name="Muench K."/>
            <person name="Roessel N."/>
            <person name="Scherer M."/>
            <person name="Vranes M."/>
            <person name="Ladendorf O."/>
            <person name="Vincon V."/>
            <person name="Fuchs U."/>
            <person name="Sandrock B."/>
            <person name="Meng S."/>
            <person name="Ho E.C.H."/>
            <person name="Cahill M.J."/>
            <person name="Boyce K.J."/>
            <person name="Klose J."/>
            <person name="Klosterman S.J."/>
            <person name="Deelstra H.J."/>
            <person name="Ortiz-Castellanos L."/>
            <person name="Li W."/>
            <person name="Sanchez-Alonso P."/>
            <person name="Schreier P.H."/>
            <person name="Haeuser-Hahn I."/>
            <person name="Vaupel M."/>
            <person name="Koopmann E."/>
            <person name="Friedrich G."/>
            <person name="Voss H."/>
            <person name="Schlueter T."/>
            <person name="Margolis J."/>
            <person name="Platt D."/>
            <person name="Swimmer C."/>
            <person name="Gnirke A."/>
            <person name="Chen F."/>
            <person name="Vysotskaia V."/>
            <person name="Mannhaupt G."/>
            <person name="Gueldener U."/>
            <person name="Muensterkoetter M."/>
            <person name="Haase D."/>
            <person name="Oesterheld M."/>
            <person name="Mewes H.-W."/>
            <person name="Mauceli E.W."/>
            <person name="DeCaprio D."/>
            <person name="Wade C.M."/>
            <person name="Butler J."/>
            <person name="Young S.K."/>
            <person name="Jaffe D.B."/>
            <person name="Calvo S.E."/>
            <person name="Nusbaum C."/>
            <person name="Galagan J.E."/>
            <person name="Birren B.W."/>
        </authorList>
    </citation>
    <scope>NUCLEOTIDE SEQUENCE [LARGE SCALE GENOMIC DNA]</scope>
    <source>
        <strain>DSM 14603 / FGSC 9021 / UM521</strain>
    </source>
</reference>
<reference key="2">
    <citation type="submission" date="2014-09" db="EMBL/GenBank/DDBJ databases">
        <authorList>
            <person name="Gueldener U."/>
            <person name="Muensterkoetter M."/>
            <person name="Walter M.C."/>
            <person name="Mannhaupt G."/>
            <person name="Kahmann R."/>
        </authorList>
    </citation>
    <scope>GENOME REANNOTATION</scope>
    <source>
        <strain>DSM 14603 / FGSC 9021 / UM521</strain>
    </source>
</reference>
<organism>
    <name type="scientific">Mycosarcoma maydis</name>
    <name type="common">Corn smut fungus</name>
    <name type="synonym">Ustilago maydis</name>
    <dbReference type="NCBI Taxonomy" id="5270"/>
    <lineage>
        <taxon>Eukaryota</taxon>
        <taxon>Fungi</taxon>
        <taxon>Dikarya</taxon>
        <taxon>Basidiomycota</taxon>
        <taxon>Ustilaginomycotina</taxon>
        <taxon>Ustilaginomycetes</taxon>
        <taxon>Ustilaginales</taxon>
        <taxon>Ustilaginaceae</taxon>
        <taxon>Mycosarcoma</taxon>
    </lineage>
</organism>
<accession>Q4P2B6</accession>
<accession>A0A0D1BYS2</accession>
<comment type="function">
    <text evidence="1">Component of the coat protein complex II (COPII) which promotes the formation of transport vesicles from the endoplasmic reticulum (ER). The coat has two main functions, the physical deformation of the endoplasmic reticulum membrane into vesicles and the selection of cargo molecules (By similarity).</text>
</comment>
<comment type="subunit">
    <text evidence="1">The COPII coat is composed of at least 5 proteins: the SEC23/24 complex, the SEC13/31 complex, and the protein SAR1. SEC13 and SEC31 make a 2:2 tetramer that forms the edge element of the COPII outer coat. The tetramer self-assembles in multiple copies to form the complete polyhedral cage. Interacts (via WD 8) with SEC13 (By similarity).</text>
</comment>
<comment type="subcellular location">
    <subcellularLocation>
        <location evidence="1">Cytoplasmic vesicle</location>
        <location evidence="1">COPII-coated vesicle membrane</location>
        <topology evidence="1">Peripheral membrane protein</topology>
        <orientation evidence="1">Cytoplasmic side</orientation>
    </subcellularLocation>
    <subcellularLocation>
        <location evidence="1">Endoplasmic reticulum membrane</location>
        <topology evidence="1">Peripheral membrane protein</topology>
        <orientation evidence="1">Cytoplasmic side</orientation>
    </subcellularLocation>
</comment>
<comment type="similarity">
    <text evidence="4">Belongs to the WD repeat SEC31 family.</text>
</comment>
<proteinExistence type="inferred from homology"/>
<dbReference type="EMBL" id="CM003155">
    <property type="protein sequence ID" value="KIS66967.1"/>
    <property type="molecule type" value="Genomic_DNA"/>
</dbReference>
<dbReference type="RefSeq" id="XP_011391488.1">
    <property type="nucleotide sequence ID" value="XM_011393186.1"/>
</dbReference>
<dbReference type="SMR" id="Q4P2B6"/>
<dbReference type="FunCoup" id="Q4P2B6">
    <property type="interactions" value="385"/>
</dbReference>
<dbReference type="STRING" id="237631.Q4P2B6"/>
<dbReference type="EnsemblFungi" id="KIS66967">
    <property type="protein sequence ID" value="KIS66967"/>
    <property type="gene ID" value="UMAG_05747"/>
</dbReference>
<dbReference type="GeneID" id="23565550"/>
<dbReference type="KEGG" id="uma:UMAG_05747"/>
<dbReference type="VEuPathDB" id="FungiDB:UMAG_05747"/>
<dbReference type="eggNOG" id="KOG0307">
    <property type="taxonomic scope" value="Eukaryota"/>
</dbReference>
<dbReference type="HOGENOM" id="CLU_003033_2_0_1"/>
<dbReference type="InParanoid" id="Q4P2B6"/>
<dbReference type="OMA" id="WLERPCG"/>
<dbReference type="OrthoDB" id="542917at2759"/>
<dbReference type="Proteomes" id="UP000000561">
    <property type="component" value="Chromosome 16"/>
</dbReference>
<dbReference type="GO" id="GO:0030127">
    <property type="term" value="C:COPII vesicle coat"/>
    <property type="evidence" value="ECO:0000318"/>
    <property type="project" value="GO_Central"/>
</dbReference>
<dbReference type="GO" id="GO:0070971">
    <property type="term" value="C:endoplasmic reticulum exit site"/>
    <property type="evidence" value="ECO:0000318"/>
    <property type="project" value="GO_Central"/>
</dbReference>
<dbReference type="GO" id="GO:0005789">
    <property type="term" value="C:endoplasmic reticulum membrane"/>
    <property type="evidence" value="ECO:0007669"/>
    <property type="project" value="UniProtKB-SubCell"/>
</dbReference>
<dbReference type="GO" id="GO:0005198">
    <property type="term" value="F:structural molecule activity"/>
    <property type="evidence" value="ECO:0000318"/>
    <property type="project" value="GO_Central"/>
</dbReference>
<dbReference type="GO" id="GO:0090110">
    <property type="term" value="P:COPII-coated vesicle cargo loading"/>
    <property type="evidence" value="ECO:0000318"/>
    <property type="project" value="GO_Central"/>
</dbReference>
<dbReference type="GO" id="GO:0007029">
    <property type="term" value="P:endoplasmic reticulum organization"/>
    <property type="evidence" value="ECO:0000318"/>
    <property type="project" value="GO_Central"/>
</dbReference>
<dbReference type="GO" id="GO:0015031">
    <property type="term" value="P:protein transport"/>
    <property type="evidence" value="ECO:0007669"/>
    <property type="project" value="UniProtKB-KW"/>
</dbReference>
<dbReference type="FunFam" id="2.130.10.10:FF:000193">
    <property type="entry name" value="Protein transport protein SEC31, putative"/>
    <property type="match status" value="1"/>
</dbReference>
<dbReference type="Gene3D" id="1.25.40.1030">
    <property type="match status" value="1"/>
</dbReference>
<dbReference type="Gene3D" id="1.20.940.10">
    <property type="entry name" value="Functional domain of the splicing factor Prp18"/>
    <property type="match status" value="1"/>
</dbReference>
<dbReference type="Gene3D" id="2.130.10.10">
    <property type="entry name" value="YVTN repeat-like/Quinoprotein amine dehydrogenase"/>
    <property type="match status" value="1"/>
</dbReference>
<dbReference type="InterPro" id="IPR040251">
    <property type="entry name" value="SEC31-like"/>
</dbReference>
<dbReference type="InterPro" id="IPR015943">
    <property type="entry name" value="WD40/YVTN_repeat-like_dom_sf"/>
</dbReference>
<dbReference type="InterPro" id="IPR036322">
    <property type="entry name" value="WD40_repeat_dom_sf"/>
</dbReference>
<dbReference type="InterPro" id="IPR001680">
    <property type="entry name" value="WD40_rpt"/>
</dbReference>
<dbReference type="PANTHER" id="PTHR13923">
    <property type="entry name" value="SEC31-RELATED PROTEIN"/>
    <property type="match status" value="1"/>
</dbReference>
<dbReference type="PANTHER" id="PTHR13923:SF11">
    <property type="entry name" value="SECRETORY 31, ISOFORM D"/>
    <property type="match status" value="1"/>
</dbReference>
<dbReference type="Pfam" id="PF00400">
    <property type="entry name" value="WD40"/>
    <property type="match status" value="1"/>
</dbReference>
<dbReference type="SMART" id="SM00320">
    <property type="entry name" value="WD40"/>
    <property type="match status" value="6"/>
</dbReference>
<dbReference type="SUPFAM" id="SSF50978">
    <property type="entry name" value="WD40 repeat-like"/>
    <property type="match status" value="1"/>
</dbReference>
<dbReference type="PROSITE" id="PS00678">
    <property type="entry name" value="WD_REPEATS_1"/>
    <property type="match status" value="1"/>
</dbReference>
<dbReference type="PROSITE" id="PS50082">
    <property type="entry name" value="WD_REPEATS_2"/>
    <property type="match status" value="1"/>
</dbReference>
<dbReference type="PROSITE" id="PS50294">
    <property type="entry name" value="WD_REPEATS_REGION"/>
    <property type="match status" value="1"/>
</dbReference>
<protein>
    <recommendedName>
        <fullName>Protein transport protein SEC31</fullName>
    </recommendedName>
</protein>
<keyword id="KW-0968">Cytoplasmic vesicle</keyword>
<keyword id="KW-0256">Endoplasmic reticulum</keyword>
<keyword id="KW-0931">ER-Golgi transport</keyword>
<keyword id="KW-0472">Membrane</keyword>
<keyword id="KW-0653">Protein transport</keyword>
<keyword id="KW-1185">Reference proteome</keyword>
<keyword id="KW-0677">Repeat</keyword>
<keyword id="KW-0813">Transport</keyword>
<keyword id="KW-0853">WD repeat</keyword>
<sequence length="1416" mass="149059">MKAYINRTATFAWSPATYESDSPLIATGTVAGALDESFSNESLLELWKPFYAASADANIDADAKPLASISTSARFNRLAWGYANPSRPKGLLAAGLENGELGIWDADKVLAAAAESDAQVIKNTTHTGPVRGLDFNPLQPNLLSSGAVAGEIFIWDLNSPAKPYSPGARSSKLDEITSLAWNCQVPHVLATSSSSGYTVVWDLRGKREVVALQYGGGAGTAVGSLGINAGSALAAGGRRGMSAVAWHPDTPTRLVTASEDDSSPVIMLWDLRNSRAPEKIMTGHDKGILSLSWCKQDADLLLSCGKDNRSICWNPQTCDIVGELPSSSNWSFEVQWSPRNPGMLATASFDGKIGVHSLQSTNAPEPDAPATQQLNEDSDFFNQATAPQTTSKGLSLKQPPKWLRRPVSAVFGFGGQLVSSGGPSSKPFTPTVHLRDFVSEPSIVERATKLQHALDGQSLAEFCAQRSQDPSTRPDDIANWKALQTLFRADSRDELVALLGFSKEDIAQKVSQSIAAFKTNGTAAVEPEVTPVTNPIDEPELTKPVTSADDGADAVEAANEIVEPAAIATEPAPEVEANDIDEPGLFGDDAAGAANNDASDFFNQISAGQTPAVRSALPSHLLSESQPHIHSSAATIGSPAPSSVASESIRPSTFKIYPSEESEADKLITRALVLGEFESAVSLCINSDRFADAFLLAVRGGEELLAKTQKAYFEKRTAQLPYLRLFQSIVSDDLTDVVQNADLGEWQEIFVVLCTFSKQDEFSNLTEQLGQRLEFQYSLARNSDITQAKEHRKNAVLCYLAAGKLEKVAGMWIDEMKEEELALRSNTKNADESHKGTLYSARAEALQTFMEKITVFQSAVGYVDVDLQQPTQDSIVAETGARSYKLAPLYDRIHEYVELLADQGLISPALRFANQTPADYRPHGPADQSATATALKQRLLKAEIARPKTDTAASSSTNNVVAAASASASSYAAAPASNGYAPYDPYGQSTSSSVPTVPSVPAVPAVNTYQDPYAAAAPSPSVAAPQPPTQSRYAPAVPAPVPTAMQPEPVQTNAYGAYGAQSYQSAYQPAQPMIPAAPAFGASSYGQQQHQQQLPPPPPLKRDQSGWNDVPEGLAAPKRTPSAMSQHKSANAITSPFPNAPAQAPSPYGGAPGAPPTGPPRGATPSRGMMSPPPQGPPSGPGLAQQRVGPPGVRPPPMGPAQGQPRPGQQQPGPPSQAAPSAGPYARPPAGPGAPSANGMQQQQQPGAPPVGPGAGALRPPGQALPGAPGLAGPPGVPQRSATPGGGAGAPSRSATPGARGASQMKYPPGDRSHIPENQRPIQHALQREVARLKATAPPAQKRMIDDTERRINLLLDHLNCGTIDAKTVGGLMQIVAAIEARNKQAALNIHLQLVTSSSGDVAAGLVGVKMIISRL</sequence>